<feature type="chain" id="PRO_1000200592" description="UvrABC system protein C">
    <location>
        <begin position="1"/>
        <end position="603"/>
    </location>
</feature>
<feature type="domain" description="GIY-YIG" evidence="1">
    <location>
        <begin position="15"/>
        <end position="92"/>
    </location>
</feature>
<feature type="domain" description="UVR" evidence="1">
    <location>
        <begin position="197"/>
        <end position="232"/>
    </location>
</feature>
<comment type="function">
    <text evidence="1">The UvrABC repair system catalyzes the recognition and processing of DNA lesions. UvrC both incises the 5' and 3' sides of the lesion. The N-terminal half is responsible for the 3' incision and the C-terminal half is responsible for the 5' incision.</text>
</comment>
<comment type="subunit">
    <text evidence="1">Interacts with UvrB in an incision complex.</text>
</comment>
<comment type="subcellular location">
    <subcellularLocation>
        <location evidence="1">Cytoplasm</location>
    </subcellularLocation>
</comment>
<comment type="similarity">
    <text evidence="1">Belongs to the UvrC family.</text>
</comment>
<protein>
    <recommendedName>
        <fullName evidence="1">UvrABC system protein C</fullName>
        <shortName evidence="1">Protein UvrC</shortName>
    </recommendedName>
    <alternativeName>
        <fullName evidence="1">Excinuclease ABC subunit C</fullName>
    </alternativeName>
</protein>
<dbReference type="EMBL" id="CP001175">
    <property type="protein sequence ID" value="ACK39764.1"/>
    <property type="molecule type" value="Genomic_DNA"/>
</dbReference>
<dbReference type="RefSeq" id="WP_012581489.1">
    <property type="nucleotide sequence ID" value="NC_011660.1"/>
</dbReference>
<dbReference type="SMR" id="B8DHZ8"/>
<dbReference type="KEGG" id="lmh:LMHCC_1419"/>
<dbReference type="HOGENOM" id="CLU_014841_3_2_9"/>
<dbReference type="GO" id="GO:0005737">
    <property type="term" value="C:cytoplasm"/>
    <property type="evidence" value="ECO:0007669"/>
    <property type="project" value="UniProtKB-SubCell"/>
</dbReference>
<dbReference type="GO" id="GO:0009380">
    <property type="term" value="C:excinuclease repair complex"/>
    <property type="evidence" value="ECO:0007669"/>
    <property type="project" value="InterPro"/>
</dbReference>
<dbReference type="GO" id="GO:0003677">
    <property type="term" value="F:DNA binding"/>
    <property type="evidence" value="ECO:0007669"/>
    <property type="project" value="UniProtKB-UniRule"/>
</dbReference>
<dbReference type="GO" id="GO:0009381">
    <property type="term" value="F:excinuclease ABC activity"/>
    <property type="evidence" value="ECO:0007669"/>
    <property type="project" value="UniProtKB-UniRule"/>
</dbReference>
<dbReference type="GO" id="GO:0006289">
    <property type="term" value="P:nucleotide-excision repair"/>
    <property type="evidence" value="ECO:0007669"/>
    <property type="project" value="UniProtKB-UniRule"/>
</dbReference>
<dbReference type="GO" id="GO:0009432">
    <property type="term" value="P:SOS response"/>
    <property type="evidence" value="ECO:0007669"/>
    <property type="project" value="UniProtKB-UniRule"/>
</dbReference>
<dbReference type="CDD" id="cd10434">
    <property type="entry name" value="GIY-YIG_UvrC_Cho"/>
    <property type="match status" value="1"/>
</dbReference>
<dbReference type="FunFam" id="1.10.150.20:FF:000005">
    <property type="entry name" value="UvrABC system protein C"/>
    <property type="match status" value="1"/>
</dbReference>
<dbReference type="FunFam" id="3.30.420.340:FF:000002">
    <property type="entry name" value="UvrABC system protein C"/>
    <property type="match status" value="1"/>
</dbReference>
<dbReference type="FunFam" id="3.40.1440.10:FF:000001">
    <property type="entry name" value="UvrABC system protein C"/>
    <property type="match status" value="1"/>
</dbReference>
<dbReference type="FunFam" id="4.10.860.10:FF:000002">
    <property type="entry name" value="UvrABC system protein C"/>
    <property type="match status" value="1"/>
</dbReference>
<dbReference type="Gene3D" id="1.10.150.20">
    <property type="entry name" value="5' to 3' exonuclease, C-terminal subdomain"/>
    <property type="match status" value="1"/>
</dbReference>
<dbReference type="Gene3D" id="3.40.1440.10">
    <property type="entry name" value="GIY-YIG endonuclease"/>
    <property type="match status" value="1"/>
</dbReference>
<dbReference type="Gene3D" id="4.10.860.10">
    <property type="entry name" value="UVR domain"/>
    <property type="match status" value="1"/>
</dbReference>
<dbReference type="Gene3D" id="3.30.420.340">
    <property type="entry name" value="UvrC, RNAse H endonuclease domain"/>
    <property type="match status" value="1"/>
</dbReference>
<dbReference type="HAMAP" id="MF_00203">
    <property type="entry name" value="UvrC"/>
    <property type="match status" value="1"/>
</dbReference>
<dbReference type="InterPro" id="IPR041663">
    <property type="entry name" value="DisA/LigA_HHH"/>
</dbReference>
<dbReference type="InterPro" id="IPR000305">
    <property type="entry name" value="GIY-YIG_endonuc"/>
</dbReference>
<dbReference type="InterPro" id="IPR035901">
    <property type="entry name" value="GIY-YIG_endonuc_sf"/>
</dbReference>
<dbReference type="InterPro" id="IPR047296">
    <property type="entry name" value="GIY-YIG_UvrC_Cho"/>
</dbReference>
<dbReference type="InterPro" id="IPR010994">
    <property type="entry name" value="RuvA_2-like"/>
</dbReference>
<dbReference type="InterPro" id="IPR001943">
    <property type="entry name" value="UVR_dom"/>
</dbReference>
<dbReference type="InterPro" id="IPR036876">
    <property type="entry name" value="UVR_dom_sf"/>
</dbReference>
<dbReference type="InterPro" id="IPR050066">
    <property type="entry name" value="UvrABC_protein_C"/>
</dbReference>
<dbReference type="InterPro" id="IPR004791">
    <property type="entry name" value="UvrC"/>
</dbReference>
<dbReference type="InterPro" id="IPR001162">
    <property type="entry name" value="UvrC_RNase_H_dom"/>
</dbReference>
<dbReference type="InterPro" id="IPR038476">
    <property type="entry name" value="UvrC_RNase_H_dom_sf"/>
</dbReference>
<dbReference type="NCBIfam" id="TIGR00194">
    <property type="entry name" value="uvrC"/>
    <property type="match status" value="1"/>
</dbReference>
<dbReference type="PANTHER" id="PTHR30562:SF1">
    <property type="entry name" value="UVRABC SYSTEM PROTEIN C"/>
    <property type="match status" value="1"/>
</dbReference>
<dbReference type="PANTHER" id="PTHR30562">
    <property type="entry name" value="UVRC/OXIDOREDUCTASE"/>
    <property type="match status" value="1"/>
</dbReference>
<dbReference type="Pfam" id="PF01541">
    <property type="entry name" value="GIY-YIG"/>
    <property type="match status" value="1"/>
</dbReference>
<dbReference type="Pfam" id="PF12826">
    <property type="entry name" value="HHH_2"/>
    <property type="match status" value="1"/>
</dbReference>
<dbReference type="Pfam" id="PF02151">
    <property type="entry name" value="UVR"/>
    <property type="match status" value="1"/>
</dbReference>
<dbReference type="Pfam" id="PF22920">
    <property type="entry name" value="UvrC_RNaseH"/>
    <property type="match status" value="1"/>
</dbReference>
<dbReference type="Pfam" id="PF08459">
    <property type="entry name" value="UvrC_RNaseH_dom"/>
    <property type="match status" value="1"/>
</dbReference>
<dbReference type="SMART" id="SM00465">
    <property type="entry name" value="GIYc"/>
    <property type="match status" value="1"/>
</dbReference>
<dbReference type="SUPFAM" id="SSF46600">
    <property type="entry name" value="C-terminal UvrC-binding domain of UvrB"/>
    <property type="match status" value="1"/>
</dbReference>
<dbReference type="SUPFAM" id="SSF82771">
    <property type="entry name" value="GIY-YIG endonuclease"/>
    <property type="match status" value="1"/>
</dbReference>
<dbReference type="SUPFAM" id="SSF47781">
    <property type="entry name" value="RuvA domain 2-like"/>
    <property type="match status" value="1"/>
</dbReference>
<dbReference type="PROSITE" id="PS50164">
    <property type="entry name" value="GIY_YIG"/>
    <property type="match status" value="1"/>
</dbReference>
<dbReference type="PROSITE" id="PS50151">
    <property type="entry name" value="UVR"/>
    <property type="match status" value="1"/>
</dbReference>
<dbReference type="PROSITE" id="PS50165">
    <property type="entry name" value="UVRC"/>
    <property type="match status" value="1"/>
</dbReference>
<proteinExistence type="inferred from homology"/>
<accession>B8DHZ8</accession>
<gene>
    <name evidence="1" type="primary">uvrC</name>
    <name type="ordered locus">LMHCC_1419</name>
</gene>
<organism>
    <name type="scientific">Listeria monocytogenes serotype 4a (strain HCC23)</name>
    <dbReference type="NCBI Taxonomy" id="552536"/>
    <lineage>
        <taxon>Bacteria</taxon>
        <taxon>Bacillati</taxon>
        <taxon>Bacillota</taxon>
        <taxon>Bacilli</taxon>
        <taxon>Bacillales</taxon>
        <taxon>Listeriaceae</taxon>
        <taxon>Listeria</taxon>
    </lineage>
</organism>
<name>UVRC_LISMH</name>
<reference key="1">
    <citation type="journal article" date="2011" name="J. Bacteriol.">
        <title>Genome sequence of lineage III Listeria monocytogenes strain HCC23.</title>
        <authorList>
            <person name="Steele C.L."/>
            <person name="Donaldson J.R."/>
            <person name="Paul D."/>
            <person name="Banes M.M."/>
            <person name="Arick T."/>
            <person name="Bridges S.M."/>
            <person name="Lawrence M.L."/>
        </authorList>
    </citation>
    <scope>NUCLEOTIDE SEQUENCE [LARGE SCALE GENOMIC DNA]</scope>
    <source>
        <strain>HCC23</strain>
    </source>
</reference>
<evidence type="ECO:0000255" key="1">
    <source>
        <dbReference type="HAMAP-Rule" id="MF_00203"/>
    </source>
</evidence>
<keyword id="KW-0963">Cytoplasm</keyword>
<keyword id="KW-0227">DNA damage</keyword>
<keyword id="KW-0228">DNA excision</keyword>
<keyword id="KW-0234">DNA repair</keyword>
<keyword id="KW-0267">Excision nuclease</keyword>
<keyword id="KW-0742">SOS response</keyword>
<sequence>MSSEHIQNKLALLPDQPGCYLMKDRQGTIIYVGKAKILKNRVRSYFSGTHDSKTQRLVQEIVDFEYIVTSSNVEALLLEINLIKKHDPRFNIRLKDDKTYPFIKITNERHPRLIITRQVKKDKGKYFGPYPNVYAANEVKRILDRLYPLRKCSTLPNKVCLYYHLGQCLAPCVFDVEASKYKEMQDEIVAFLNGGYKTVKNDLMKKMQEAAENMEFEKAGEFRDQINAIETTMEKQKMTMNDFVDRDVFGYAIDKGWMCVQVFFIRQGKLIERDVSQFPFYNDADEDFLTFIGQFYQKANHIPPKEIYLPDDVDSEAVQAVVPDTKIIVPQRGNKKDLVKLAYKNAKISLNEKFMLLERNEERTVGAVERLGEAMGIPTPSRVEAFDNSNIHGTDPVSAMVTFLDGKPSKNDYRKYKIKTVEGPDDYATMREVIRRRYWRVLKEGLPMPDLILIDGGKGQIDSAKDVLTNELGLDIPVAGLAKDDKHRTSQLLFGDPLEIVPLERNSQEFYLLQRMQDEVHRFAITFHRQLRSKTGFQSILDGIPGVGPGRKKKLLKHFGSMKKLKEASVEEIKEAGVPLNVAEEVHKHITAFNEKAKNTEQK</sequence>